<organism>
    <name type="scientific">Prochlorococcus marinus subsp. pastoris (strain CCMP1986 / NIES-2087 / MED4)</name>
    <dbReference type="NCBI Taxonomy" id="59919"/>
    <lineage>
        <taxon>Bacteria</taxon>
        <taxon>Bacillati</taxon>
        <taxon>Cyanobacteriota</taxon>
        <taxon>Cyanophyceae</taxon>
        <taxon>Synechococcales</taxon>
        <taxon>Prochlorococcaceae</taxon>
        <taxon>Prochlorococcus</taxon>
    </lineage>
</organism>
<reference key="1">
    <citation type="journal article" date="2003" name="Nature">
        <title>Genome divergence in two Prochlorococcus ecotypes reflects oceanic niche differentiation.</title>
        <authorList>
            <person name="Rocap G."/>
            <person name="Larimer F.W."/>
            <person name="Lamerdin J.E."/>
            <person name="Malfatti S."/>
            <person name="Chain P."/>
            <person name="Ahlgren N.A."/>
            <person name="Arellano A."/>
            <person name="Coleman M."/>
            <person name="Hauser L."/>
            <person name="Hess W.R."/>
            <person name="Johnson Z.I."/>
            <person name="Land M.L."/>
            <person name="Lindell D."/>
            <person name="Post A.F."/>
            <person name="Regala W."/>
            <person name="Shah M."/>
            <person name="Shaw S.L."/>
            <person name="Steglich C."/>
            <person name="Sullivan M.B."/>
            <person name="Ting C.S."/>
            <person name="Tolonen A."/>
            <person name="Webb E.A."/>
            <person name="Zinser E.R."/>
            <person name="Chisholm S.W."/>
        </authorList>
    </citation>
    <scope>NUCLEOTIDE SEQUENCE [LARGE SCALE GENOMIC DNA]</scope>
    <source>
        <strain>CCMP1986 / NIES-2087 / MED4</strain>
    </source>
</reference>
<name>SEPF_PROMP</name>
<accession>Q7V2S2</accession>
<feature type="chain" id="PRO_0000334066" description="Cell division protein SepF">
    <location>
        <begin position="1"/>
        <end position="191"/>
    </location>
</feature>
<feature type="region of interest" description="Disordered" evidence="2">
    <location>
        <begin position="153"/>
        <end position="191"/>
    </location>
</feature>
<feature type="compositionally biased region" description="Polar residues" evidence="2">
    <location>
        <begin position="153"/>
        <end position="178"/>
    </location>
</feature>
<protein>
    <recommendedName>
        <fullName evidence="1">Cell division protein SepF</fullName>
    </recommendedName>
</protein>
<gene>
    <name evidence="1" type="primary">sepF</name>
    <name type="ordered locus">PMM0395</name>
</gene>
<sequence length="191" mass="21147">MSLISRLKAVVAGDDFLDDDFDELDYASEDEFNGNDDLKQNYKKSNALSNSNPFEFMNNNRTSNVVGMPGIANSSSEVNLMEPRSFDEMPQAIQALRERKTVILNLTMMDPDQAQRAVDFVAGGTYAIDGHQERVGESIFLFAPSCVNVTSSFPEEASPSNVSSKKTSQYKFETNTTPEPAWGESKLSAYN</sequence>
<keyword id="KW-0131">Cell cycle</keyword>
<keyword id="KW-0132">Cell division</keyword>
<keyword id="KW-0963">Cytoplasm</keyword>
<keyword id="KW-0717">Septation</keyword>
<comment type="function">
    <text evidence="1">Cell division protein that is part of the divisome complex and is recruited early to the Z-ring. Probably stimulates Z-ring formation, perhaps through the cross-linking of FtsZ protofilaments. Its function overlaps with FtsA.</text>
</comment>
<comment type="subunit">
    <text evidence="1">Homodimer. Interacts with FtsZ.</text>
</comment>
<comment type="subcellular location">
    <subcellularLocation>
        <location evidence="1">Cytoplasm</location>
    </subcellularLocation>
    <text evidence="1">Localizes to the division site, in a FtsZ-dependent manner.</text>
</comment>
<comment type="similarity">
    <text evidence="1">Belongs to the SepF family.</text>
</comment>
<dbReference type="EMBL" id="BX548174">
    <property type="protein sequence ID" value="CAE18854.1"/>
    <property type="molecule type" value="Genomic_DNA"/>
</dbReference>
<dbReference type="RefSeq" id="WP_011132031.1">
    <property type="nucleotide sequence ID" value="NC_005072.1"/>
</dbReference>
<dbReference type="SMR" id="Q7V2S2"/>
<dbReference type="STRING" id="59919.PMM0395"/>
<dbReference type="KEGG" id="pmm:PMM0395"/>
<dbReference type="eggNOG" id="COG1799">
    <property type="taxonomic scope" value="Bacteria"/>
</dbReference>
<dbReference type="HOGENOM" id="CLU_078499_1_0_3"/>
<dbReference type="OrthoDB" id="9815206at2"/>
<dbReference type="Proteomes" id="UP000001026">
    <property type="component" value="Chromosome"/>
</dbReference>
<dbReference type="GO" id="GO:0005737">
    <property type="term" value="C:cytoplasm"/>
    <property type="evidence" value="ECO:0007669"/>
    <property type="project" value="UniProtKB-SubCell"/>
</dbReference>
<dbReference type="GO" id="GO:0000917">
    <property type="term" value="P:division septum assembly"/>
    <property type="evidence" value="ECO:0007669"/>
    <property type="project" value="UniProtKB-KW"/>
</dbReference>
<dbReference type="GO" id="GO:0043093">
    <property type="term" value="P:FtsZ-dependent cytokinesis"/>
    <property type="evidence" value="ECO:0007669"/>
    <property type="project" value="UniProtKB-UniRule"/>
</dbReference>
<dbReference type="Gene3D" id="3.30.110.150">
    <property type="entry name" value="SepF-like protein"/>
    <property type="match status" value="1"/>
</dbReference>
<dbReference type="HAMAP" id="MF_01197">
    <property type="entry name" value="SepF"/>
    <property type="match status" value="1"/>
</dbReference>
<dbReference type="InterPro" id="IPR023052">
    <property type="entry name" value="Cell_div_SepF"/>
</dbReference>
<dbReference type="InterPro" id="IPR007561">
    <property type="entry name" value="Cell_div_SepF/SepF-rel"/>
</dbReference>
<dbReference type="InterPro" id="IPR038594">
    <property type="entry name" value="SepF-like_sf"/>
</dbReference>
<dbReference type="PANTHER" id="PTHR35798">
    <property type="entry name" value="CELL DIVISION PROTEIN SEPF"/>
    <property type="match status" value="1"/>
</dbReference>
<dbReference type="PANTHER" id="PTHR35798:SF1">
    <property type="entry name" value="CELL DIVISION PROTEIN SEPF"/>
    <property type="match status" value="1"/>
</dbReference>
<dbReference type="Pfam" id="PF04472">
    <property type="entry name" value="SepF"/>
    <property type="match status" value="1"/>
</dbReference>
<evidence type="ECO:0000255" key="1">
    <source>
        <dbReference type="HAMAP-Rule" id="MF_01197"/>
    </source>
</evidence>
<evidence type="ECO:0000256" key="2">
    <source>
        <dbReference type="SAM" id="MobiDB-lite"/>
    </source>
</evidence>
<proteinExistence type="inferred from homology"/>